<reference key="1">
    <citation type="journal article" date="2006" name="Genome Res.">
        <title>Skewed genomic variability in strains of the toxigenic bacterial pathogen, Clostridium perfringens.</title>
        <authorList>
            <person name="Myers G.S.A."/>
            <person name="Rasko D.A."/>
            <person name="Cheung J.K."/>
            <person name="Ravel J."/>
            <person name="Seshadri R."/>
            <person name="DeBoy R.T."/>
            <person name="Ren Q."/>
            <person name="Varga J."/>
            <person name="Awad M.M."/>
            <person name="Brinkac L.M."/>
            <person name="Daugherty S.C."/>
            <person name="Haft D.H."/>
            <person name="Dodson R.J."/>
            <person name="Madupu R."/>
            <person name="Nelson W.C."/>
            <person name="Rosovitz M.J."/>
            <person name="Sullivan S.A."/>
            <person name="Khouri H."/>
            <person name="Dimitrov G.I."/>
            <person name="Watkins K.L."/>
            <person name="Mulligan S."/>
            <person name="Benton J."/>
            <person name="Radune D."/>
            <person name="Fisher D.J."/>
            <person name="Atkins H.S."/>
            <person name="Hiscox T."/>
            <person name="Jost B.H."/>
            <person name="Billington S.J."/>
            <person name="Songer J.G."/>
            <person name="McClane B.A."/>
            <person name="Titball R.W."/>
            <person name="Rood J.I."/>
            <person name="Melville S.B."/>
            <person name="Paulsen I.T."/>
        </authorList>
    </citation>
    <scope>NUCLEOTIDE SEQUENCE [LARGE SCALE GENOMIC DNA]</scope>
    <source>
        <strain>ATCC 13124 / DSM 756 / JCM 1290 / NCIMB 6125 / NCTC 8237 / S 107 / Type A</strain>
    </source>
</reference>
<proteinExistence type="inferred from homology"/>
<gene>
    <name evidence="1" type="primary">rplV</name>
    <name type="ordered locus">CPF_2709</name>
</gene>
<evidence type="ECO:0000255" key="1">
    <source>
        <dbReference type="HAMAP-Rule" id="MF_01331"/>
    </source>
</evidence>
<evidence type="ECO:0000305" key="2"/>
<accession>Q0TMQ1</accession>
<dbReference type="EMBL" id="CP000246">
    <property type="protein sequence ID" value="ABG83667.1"/>
    <property type="molecule type" value="Genomic_DNA"/>
</dbReference>
<dbReference type="RefSeq" id="WP_003454177.1">
    <property type="nucleotide sequence ID" value="NC_008261.1"/>
</dbReference>
<dbReference type="SMR" id="Q0TMQ1"/>
<dbReference type="STRING" id="195103.CPF_2709"/>
<dbReference type="PaxDb" id="195103-CPF_2709"/>
<dbReference type="GeneID" id="93001014"/>
<dbReference type="KEGG" id="cpf:CPF_2709"/>
<dbReference type="eggNOG" id="COG0091">
    <property type="taxonomic scope" value="Bacteria"/>
</dbReference>
<dbReference type="HOGENOM" id="CLU_083987_3_3_9"/>
<dbReference type="Proteomes" id="UP000001823">
    <property type="component" value="Chromosome"/>
</dbReference>
<dbReference type="GO" id="GO:0022625">
    <property type="term" value="C:cytosolic large ribosomal subunit"/>
    <property type="evidence" value="ECO:0007669"/>
    <property type="project" value="TreeGrafter"/>
</dbReference>
<dbReference type="GO" id="GO:0019843">
    <property type="term" value="F:rRNA binding"/>
    <property type="evidence" value="ECO:0007669"/>
    <property type="project" value="UniProtKB-UniRule"/>
</dbReference>
<dbReference type="GO" id="GO:0003735">
    <property type="term" value="F:structural constituent of ribosome"/>
    <property type="evidence" value="ECO:0007669"/>
    <property type="project" value="InterPro"/>
</dbReference>
<dbReference type="GO" id="GO:0006412">
    <property type="term" value="P:translation"/>
    <property type="evidence" value="ECO:0007669"/>
    <property type="project" value="UniProtKB-UniRule"/>
</dbReference>
<dbReference type="CDD" id="cd00336">
    <property type="entry name" value="Ribosomal_L22"/>
    <property type="match status" value="1"/>
</dbReference>
<dbReference type="FunFam" id="3.90.470.10:FF:000011">
    <property type="entry name" value="50S ribosomal protein L22"/>
    <property type="match status" value="1"/>
</dbReference>
<dbReference type="Gene3D" id="3.90.470.10">
    <property type="entry name" value="Ribosomal protein L22/L17"/>
    <property type="match status" value="1"/>
</dbReference>
<dbReference type="HAMAP" id="MF_01331_B">
    <property type="entry name" value="Ribosomal_uL22_B"/>
    <property type="match status" value="1"/>
</dbReference>
<dbReference type="InterPro" id="IPR001063">
    <property type="entry name" value="Ribosomal_uL22"/>
</dbReference>
<dbReference type="InterPro" id="IPR005727">
    <property type="entry name" value="Ribosomal_uL22_bac/chlpt-type"/>
</dbReference>
<dbReference type="InterPro" id="IPR047867">
    <property type="entry name" value="Ribosomal_uL22_bac/org-type"/>
</dbReference>
<dbReference type="InterPro" id="IPR036394">
    <property type="entry name" value="Ribosomal_uL22_sf"/>
</dbReference>
<dbReference type="NCBIfam" id="TIGR01044">
    <property type="entry name" value="rplV_bact"/>
    <property type="match status" value="1"/>
</dbReference>
<dbReference type="PANTHER" id="PTHR13501">
    <property type="entry name" value="CHLOROPLAST 50S RIBOSOMAL PROTEIN L22-RELATED"/>
    <property type="match status" value="1"/>
</dbReference>
<dbReference type="PANTHER" id="PTHR13501:SF8">
    <property type="entry name" value="LARGE RIBOSOMAL SUBUNIT PROTEIN UL22M"/>
    <property type="match status" value="1"/>
</dbReference>
<dbReference type="Pfam" id="PF00237">
    <property type="entry name" value="Ribosomal_L22"/>
    <property type="match status" value="1"/>
</dbReference>
<dbReference type="SUPFAM" id="SSF54843">
    <property type="entry name" value="Ribosomal protein L22"/>
    <property type="match status" value="1"/>
</dbReference>
<name>RL22_CLOP1</name>
<organism>
    <name type="scientific">Clostridium perfringens (strain ATCC 13124 / DSM 756 / JCM 1290 / NCIMB 6125 / NCTC 8237 / Type A)</name>
    <dbReference type="NCBI Taxonomy" id="195103"/>
    <lineage>
        <taxon>Bacteria</taxon>
        <taxon>Bacillati</taxon>
        <taxon>Bacillota</taxon>
        <taxon>Clostridia</taxon>
        <taxon>Eubacteriales</taxon>
        <taxon>Clostridiaceae</taxon>
        <taxon>Clostridium</taxon>
    </lineage>
</organism>
<comment type="function">
    <text evidence="1">This protein binds specifically to 23S rRNA; its binding is stimulated by other ribosomal proteins, e.g. L4, L17, and L20. It is important during the early stages of 50S assembly. It makes multiple contacts with different domains of the 23S rRNA in the assembled 50S subunit and ribosome (By similarity).</text>
</comment>
<comment type="function">
    <text evidence="1">The globular domain of the protein is located near the polypeptide exit tunnel on the outside of the subunit, while an extended beta-hairpin is found that lines the wall of the exit tunnel in the center of the 70S ribosome.</text>
</comment>
<comment type="subunit">
    <text evidence="1">Part of the 50S ribosomal subunit.</text>
</comment>
<comment type="similarity">
    <text evidence="1">Belongs to the universal ribosomal protein uL22 family.</text>
</comment>
<sequence length="111" mass="12335">MEAKAIAKYVRMSPTKVGVVLDLIRGKNVNEAFAILKYTPRDAAEVISKVLKSAVANAENNHELDANRLFVAEAHVGHGPTLKRFRPMDHGKAFRINKRTSNITLVVKERA</sequence>
<protein>
    <recommendedName>
        <fullName evidence="1">Large ribosomal subunit protein uL22</fullName>
    </recommendedName>
    <alternativeName>
        <fullName evidence="2">50S ribosomal protein L22</fullName>
    </alternativeName>
</protein>
<feature type="chain" id="PRO_1000052562" description="Large ribosomal subunit protein uL22">
    <location>
        <begin position="1"/>
        <end position="111"/>
    </location>
</feature>
<keyword id="KW-0687">Ribonucleoprotein</keyword>
<keyword id="KW-0689">Ribosomal protein</keyword>
<keyword id="KW-0694">RNA-binding</keyword>
<keyword id="KW-0699">rRNA-binding</keyword>